<reference key="1">
    <citation type="journal article" date="1988" name="Curr. Genet.">
        <title>Characterization of a large inversion in the spinach chloroplast genome relative to Marchantia: a possible transposon-mediated origin.</title>
        <authorList>
            <person name="Zhou D.X."/>
            <person name="Massenet O."/>
            <person name="Quigley F."/>
            <person name="Marion M.J."/>
            <person name="Moneger F."/>
            <person name="Huber P."/>
            <person name="Mache R."/>
        </authorList>
    </citation>
    <scope>NUCLEOTIDE SEQUENCE [GENOMIC DNA]</scope>
</reference>
<reference key="2">
    <citation type="journal article" date="2001" name="Plant Mol. Biol.">
        <title>The plastid chromosome of spinach (Spinacia oleracea): complete nucleotide sequence and gene organization.</title>
        <authorList>
            <person name="Schmitz-Linneweber C."/>
            <person name="Maier R.M."/>
            <person name="Alcaraz J.-P."/>
            <person name="Cottet A."/>
            <person name="Herrmann R.G."/>
            <person name="Mache R."/>
        </authorList>
    </citation>
    <scope>NUCLEOTIDE SEQUENCE [LARGE SCALE GENOMIC DNA]</scope>
    <scope>TRANSCRIPT ANALYSIS</scope>
    <scope>SUGGESTION THAT IT IS A PSEUDOGENE</scope>
    <source>
        <strain>cv. Geant d'hiver</strain>
        <strain>cv. Monatol</strain>
    </source>
</reference>
<geneLocation type="chloroplast"/>
<dbReference type="EMBL" id="X07908">
    <property type="protein sequence ID" value="CAA30744.1"/>
    <property type="molecule type" value="Genomic_DNA"/>
</dbReference>
<dbReference type="PIR" id="S01447">
    <property type="entry name" value="S01447"/>
</dbReference>
<dbReference type="Proteomes" id="UP001155700">
    <property type="component" value="Unplaced"/>
</dbReference>
<dbReference type="GO" id="GO:0009507">
    <property type="term" value="C:chloroplast"/>
    <property type="evidence" value="ECO:0007669"/>
    <property type="project" value="UniProtKB-SubCell"/>
</dbReference>
<dbReference type="InterPro" id="IPR019645">
    <property type="entry name" value="Uncharacterised_Ycf15"/>
</dbReference>
<dbReference type="Pfam" id="PF10705">
    <property type="entry name" value="Ycf15"/>
    <property type="match status" value="1"/>
</dbReference>
<evidence type="ECO:0000305" key="1"/>
<gene>
    <name type="primary">ycf15</name>
</gene>
<accession>P08974</accession>
<protein>
    <recommendedName>
        <fullName>Putative uncharacterized protein ycf15</fullName>
    </recommendedName>
    <alternativeName>
        <fullName>ORF 63</fullName>
    </alternativeName>
</protein>
<comment type="subcellular location">
    <subcellularLocation>
        <location>Plastid</location>
        <location>Chloroplast</location>
    </subcellularLocation>
</comment>
<comment type="similarity">
    <text evidence="1">Belongs to the ycf15 family.</text>
</comment>
<comment type="caution">
    <text evidence="1">Could be the product of a pseudogene. It is transcribed.</text>
</comment>
<feature type="chain" id="PRO_0000217313" description="Putative uncharacterized protein ycf15">
    <location>
        <begin position="1"/>
        <end position="63"/>
    </location>
</feature>
<organism>
    <name type="scientific">Spinacia oleracea</name>
    <name type="common">Spinach</name>
    <dbReference type="NCBI Taxonomy" id="3562"/>
    <lineage>
        <taxon>Eukaryota</taxon>
        <taxon>Viridiplantae</taxon>
        <taxon>Streptophyta</taxon>
        <taxon>Embryophyta</taxon>
        <taxon>Tracheophyta</taxon>
        <taxon>Spermatophyta</taxon>
        <taxon>Magnoliopsida</taxon>
        <taxon>eudicotyledons</taxon>
        <taxon>Gunneridae</taxon>
        <taxon>Pentapetalae</taxon>
        <taxon>Caryophyllales</taxon>
        <taxon>Chenopodiaceae</taxon>
        <taxon>Chenopodioideae</taxon>
        <taxon>Anserineae</taxon>
        <taxon>Spinacia</taxon>
    </lineage>
</organism>
<name>YCF15_SPIOL</name>
<keyword id="KW-0150">Chloroplast</keyword>
<keyword id="KW-0934">Plastid</keyword>
<keyword id="KW-1185">Reference proteome</keyword>
<proteinExistence type="uncertain"/>
<sequence length="63" mass="7535">MLLLKHGRIEILDQNTMYGWYELPKQEFLNSEQPEPITHSIKKFPLMKDVNPLENQKYACLMK</sequence>